<gene>
    <name type="primary">BIS2</name>
</gene>
<dbReference type="EC" id="2.3.1.208"/>
<dbReference type="EMBL" id="FJ706068">
    <property type="protein sequence ID" value="ACW82504.1"/>
    <property type="molecule type" value="mRNA"/>
</dbReference>
<dbReference type="SMR" id="D2DRC4"/>
<dbReference type="KEGG" id="ag:ACW82504"/>
<dbReference type="SABIO-RK" id="D2DRC4"/>
<dbReference type="GO" id="GO:0033815">
    <property type="term" value="F:biphenyl synthase activity"/>
    <property type="evidence" value="ECO:0000314"/>
    <property type="project" value="UniProtKB"/>
</dbReference>
<dbReference type="GO" id="GO:1901886">
    <property type="term" value="P:2-hydroxybenzoyl-CoA catabolic process"/>
    <property type="evidence" value="ECO:0000314"/>
    <property type="project" value="UniProtKB"/>
</dbReference>
<dbReference type="GO" id="GO:1901884">
    <property type="term" value="P:4-hydroxycoumarin biosynthetic process"/>
    <property type="evidence" value="ECO:0000314"/>
    <property type="project" value="UniProtKB"/>
</dbReference>
<dbReference type="GO" id="GO:0009805">
    <property type="term" value="P:coumarin biosynthetic process"/>
    <property type="evidence" value="ECO:0000314"/>
    <property type="project" value="UniProtKB"/>
</dbReference>
<dbReference type="GO" id="GO:0030639">
    <property type="term" value="P:polyketide biosynthetic process"/>
    <property type="evidence" value="ECO:0007669"/>
    <property type="project" value="TreeGrafter"/>
</dbReference>
<dbReference type="CDD" id="cd00831">
    <property type="entry name" value="CHS_like"/>
    <property type="match status" value="1"/>
</dbReference>
<dbReference type="FunFam" id="3.40.47.10:FF:000014">
    <property type="entry name" value="Chalcone synthase 1"/>
    <property type="match status" value="1"/>
</dbReference>
<dbReference type="FunFam" id="3.40.47.10:FF:000025">
    <property type="entry name" value="Chalcone synthase 2"/>
    <property type="match status" value="1"/>
</dbReference>
<dbReference type="Gene3D" id="3.40.47.10">
    <property type="match status" value="2"/>
</dbReference>
<dbReference type="InterPro" id="IPR012328">
    <property type="entry name" value="Chalcone/stilbene_synt_C"/>
</dbReference>
<dbReference type="InterPro" id="IPR001099">
    <property type="entry name" value="Chalcone/stilbene_synt_N"/>
</dbReference>
<dbReference type="InterPro" id="IPR011141">
    <property type="entry name" value="Polyketide_synthase_type-III"/>
</dbReference>
<dbReference type="InterPro" id="IPR016039">
    <property type="entry name" value="Thiolase-like"/>
</dbReference>
<dbReference type="PANTHER" id="PTHR11877:SF14">
    <property type="entry name" value="CHALCONE SYNTHASE"/>
    <property type="match status" value="1"/>
</dbReference>
<dbReference type="PANTHER" id="PTHR11877">
    <property type="entry name" value="HYDROXYMETHYLGLUTARYL-COA SYNTHASE"/>
    <property type="match status" value="1"/>
</dbReference>
<dbReference type="Pfam" id="PF02797">
    <property type="entry name" value="Chal_sti_synt_C"/>
    <property type="match status" value="1"/>
</dbReference>
<dbReference type="Pfam" id="PF00195">
    <property type="entry name" value="Chal_sti_synt_N"/>
    <property type="match status" value="1"/>
</dbReference>
<dbReference type="PIRSF" id="PIRSF000451">
    <property type="entry name" value="PKS_III"/>
    <property type="match status" value="1"/>
</dbReference>
<dbReference type="SUPFAM" id="SSF53901">
    <property type="entry name" value="Thiolase-like"/>
    <property type="match status" value="2"/>
</dbReference>
<name>BIPS2_SORAU</name>
<proteinExistence type="evidence at protein level"/>
<evidence type="ECO:0000250" key="1"/>
<evidence type="ECO:0000269" key="2">
    <source>
    </source>
</evidence>
<evidence type="ECO:0000305" key="3"/>
<accession>D2DRC4</accession>
<reference key="1">
    <citation type="journal article" date="2010" name="Plant Mol. Biol.">
        <title>A novel 4-hydroxycoumarin biosynthetic pathway.</title>
        <authorList>
            <person name="Liu B."/>
            <person name="Raeth T."/>
            <person name="Beuerle T."/>
            <person name="Beerhues L."/>
        </authorList>
    </citation>
    <scope>NUCLEOTIDE SEQUENCE [MRNA]</scope>
    <scope>FUNCTION</scope>
    <scope>INDUCTION BY ELICITOR</scope>
    <scope>BIOPHYSICOCHEMICAL PROPERTIES</scope>
</reference>
<comment type="function">
    <text evidence="2">Type III polyketide synthase involved preferentially in the biosynthesis of 4-hydroxycoumarin from salicoyl-CoA. Can also use benzoyl-CoA and malonyl-CoA to produce 3,5-dihydroxybiphenyl as a major product and benzoyldiacetic acid lactone as a minor side product. Can also use m-hydroxybenzoyl-CoA as substrate, producing m-hydroxybenzoyl diacetic acid lactone as a derailment product. No activity with p-hydroxybenzoyl-CoA, CoA-linked cinnamic acids or acetyl-CoA.</text>
</comment>
<comment type="catalytic activity">
    <reaction>
        <text>2-hydroxybenzoyl-CoA + malonyl-CoA = 4-hydroxycoumarin + CO2 + 2 CoA</text>
        <dbReference type="Rhea" id="RHEA:34175"/>
        <dbReference type="ChEBI" id="CHEBI:16526"/>
        <dbReference type="ChEBI" id="CHEBI:57287"/>
        <dbReference type="ChEBI" id="CHEBI:57384"/>
        <dbReference type="ChEBI" id="CHEBI:67148"/>
        <dbReference type="ChEBI" id="CHEBI:77858"/>
        <dbReference type="EC" id="2.3.1.208"/>
    </reaction>
</comment>
<comment type="biophysicochemical properties">
    <kinetics>
        <KM evidence="2">1.4 uM for benzoyl-CoA</KM>
        <KM evidence="2">10 uM for malonyl-CoA</KM>
        <KM evidence="2">2.3 uM for salicoyl-CoA</KM>
        <text>kcat is 0.89 min(-1) with benzoyl-CoA as substrate. kcat is 1.76 min(-1) with salicoyl-CoA as substrate.</text>
    </kinetics>
    <phDependence>
        <text evidence="2">Optimum pH is 6.5-7.0.</text>
    </phDependence>
    <temperatureDependence>
        <text evidence="2">Optimum temperature is 35 degrees Celsius.</text>
    </temperatureDependence>
</comment>
<comment type="subunit">
    <text evidence="1">Homodimer.</text>
</comment>
<comment type="induction">
    <text evidence="2">Not regulated by elicitor.</text>
</comment>
<comment type="similarity">
    <text evidence="3">Belongs to the thiolase-like superfamily. Chalcone/stilbene synthases family.</text>
</comment>
<feature type="chain" id="PRO_0000421868" description="4-hydroxycoumarin synthase 1">
    <location>
        <begin position="1"/>
        <end position="390"/>
    </location>
</feature>
<feature type="active site" evidence="1">
    <location>
        <position position="161"/>
    </location>
</feature>
<keyword id="KW-0012">Acyltransferase</keyword>
<keyword id="KW-0808">Transferase</keyword>
<sequence>MAPSVKDQVEPQHAKILAIGTANPPNVYYQEDYPDFLFRVTKNEHRTDLREKFDRICEKSRTRKRYLYLTEEILKANPCIYTYGAPSLDVRQDMLNPEVPKLGQEAALKAIKEWGQPISKITHLIFCTASCVDMPGADFQLVKLLGLNPSVTRTMIYEAGCYAGATVLRLAKDFAENNEGARVLVVCAEITTVFFHGLTDTHLDILVGQALFADGASAVIVGANPEPEIESPLFEIVACRQTIIPNSEHGVVANIREMGFNYYLSGEVPKFVGGNVVDFLTKTFEKVDGKNKDWNSLFFSVHPGGPAIVDQVEEQLGLKEGKLRATRHVLSEYGNMGAPSVHFILDEMRKKSIEEGKATTGEGLEWGVVIGIGPGLTVETAVLRSEFITC</sequence>
<protein>
    <recommendedName>
        <fullName>4-hydroxycoumarin synthase 1</fullName>
        <ecNumber>2.3.1.208</ecNumber>
    </recommendedName>
    <alternativeName>
        <fullName>Biphenyl synthase 2</fullName>
        <shortName>SaBIS2</shortName>
    </alternativeName>
</protein>
<organism>
    <name type="scientific">Sorbus aucuparia</name>
    <name type="common">European mountain ash</name>
    <name type="synonym">Rowan</name>
    <dbReference type="NCBI Taxonomy" id="36599"/>
    <lineage>
        <taxon>Eukaryota</taxon>
        <taxon>Viridiplantae</taxon>
        <taxon>Streptophyta</taxon>
        <taxon>Embryophyta</taxon>
        <taxon>Tracheophyta</taxon>
        <taxon>Spermatophyta</taxon>
        <taxon>Magnoliopsida</taxon>
        <taxon>eudicotyledons</taxon>
        <taxon>Gunneridae</taxon>
        <taxon>Pentapetalae</taxon>
        <taxon>rosids</taxon>
        <taxon>fabids</taxon>
        <taxon>Rosales</taxon>
        <taxon>Rosaceae</taxon>
        <taxon>Amygdaloideae</taxon>
        <taxon>Maleae</taxon>
        <taxon>Sorbus</taxon>
    </lineage>
</organism>